<organism>
    <name type="scientific">Staphylococcus aureus (strain bovine RF122 / ET3-1)</name>
    <dbReference type="NCBI Taxonomy" id="273036"/>
    <lineage>
        <taxon>Bacteria</taxon>
        <taxon>Bacillati</taxon>
        <taxon>Bacillota</taxon>
        <taxon>Bacilli</taxon>
        <taxon>Bacillales</taxon>
        <taxon>Staphylococcaceae</taxon>
        <taxon>Staphylococcus</taxon>
    </lineage>
</organism>
<proteinExistence type="inferred from homology"/>
<comment type="function">
    <text evidence="1">Involved in protein export. Acts as a chaperone by maintaining the newly synthesized protein in an open conformation. Functions as a peptidyl-prolyl cis-trans isomerase.</text>
</comment>
<comment type="catalytic activity">
    <reaction evidence="1">
        <text>[protein]-peptidylproline (omega=180) = [protein]-peptidylproline (omega=0)</text>
        <dbReference type="Rhea" id="RHEA:16237"/>
        <dbReference type="Rhea" id="RHEA-COMP:10747"/>
        <dbReference type="Rhea" id="RHEA-COMP:10748"/>
        <dbReference type="ChEBI" id="CHEBI:83833"/>
        <dbReference type="ChEBI" id="CHEBI:83834"/>
        <dbReference type="EC" id="5.2.1.8"/>
    </reaction>
</comment>
<comment type="subcellular location">
    <subcellularLocation>
        <location>Cytoplasm</location>
    </subcellularLocation>
    <text evidence="1">About half TF is bound to the ribosome near the polypeptide exit tunnel while the other half is free in the cytoplasm.</text>
</comment>
<comment type="domain">
    <text evidence="1">Consists of 3 domains; the N-terminus binds the ribosome, the middle domain has PPIase activity, while the C-terminus has intrinsic chaperone activity on its own.</text>
</comment>
<comment type="similarity">
    <text evidence="1">Belongs to the FKBP-type PPIase family. Tig subfamily.</text>
</comment>
<dbReference type="EC" id="5.2.1.8" evidence="1"/>
<dbReference type="EMBL" id="AJ938182">
    <property type="protein sequence ID" value="CAI81224.1"/>
    <property type="molecule type" value="Genomic_DNA"/>
</dbReference>
<dbReference type="RefSeq" id="WP_000127572.1">
    <property type="nucleotide sequence ID" value="NC_007622.1"/>
</dbReference>
<dbReference type="SMR" id="Q2YTB4"/>
<dbReference type="KEGG" id="sab:SAB1535c"/>
<dbReference type="HOGENOM" id="CLU_033058_3_2_9"/>
<dbReference type="GO" id="GO:0005737">
    <property type="term" value="C:cytoplasm"/>
    <property type="evidence" value="ECO:0007669"/>
    <property type="project" value="UniProtKB-SubCell"/>
</dbReference>
<dbReference type="GO" id="GO:0003755">
    <property type="term" value="F:peptidyl-prolyl cis-trans isomerase activity"/>
    <property type="evidence" value="ECO:0007669"/>
    <property type="project" value="UniProtKB-UniRule"/>
</dbReference>
<dbReference type="GO" id="GO:0044183">
    <property type="term" value="F:protein folding chaperone"/>
    <property type="evidence" value="ECO:0007669"/>
    <property type="project" value="TreeGrafter"/>
</dbReference>
<dbReference type="GO" id="GO:0043022">
    <property type="term" value="F:ribosome binding"/>
    <property type="evidence" value="ECO:0007669"/>
    <property type="project" value="TreeGrafter"/>
</dbReference>
<dbReference type="GO" id="GO:0051083">
    <property type="term" value="P:'de novo' cotranslational protein folding"/>
    <property type="evidence" value="ECO:0007669"/>
    <property type="project" value="TreeGrafter"/>
</dbReference>
<dbReference type="GO" id="GO:0051301">
    <property type="term" value="P:cell division"/>
    <property type="evidence" value="ECO:0007669"/>
    <property type="project" value="UniProtKB-KW"/>
</dbReference>
<dbReference type="GO" id="GO:0061077">
    <property type="term" value="P:chaperone-mediated protein folding"/>
    <property type="evidence" value="ECO:0007669"/>
    <property type="project" value="TreeGrafter"/>
</dbReference>
<dbReference type="GO" id="GO:0015031">
    <property type="term" value="P:protein transport"/>
    <property type="evidence" value="ECO:0007669"/>
    <property type="project" value="UniProtKB-UniRule"/>
</dbReference>
<dbReference type="GO" id="GO:0043335">
    <property type="term" value="P:protein unfolding"/>
    <property type="evidence" value="ECO:0007669"/>
    <property type="project" value="TreeGrafter"/>
</dbReference>
<dbReference type="FunFam" id="3.10.50.40:FF:000001">
    <property type="entry name" value="Trigger factor"/>
    <property type="match status" value="1"/>
</dbReference>
<dbReference type="FunFam" id="3.30.70.1050:FF:000002">
    <property type="entry name" value="Trigger factor"/>
    <property type="match status" value="1"/>
</dbReference>
<dbReference type="Gene3D" id="3.10.50.40">
    <property type="match status" value="1"/>
</dbReference>
<dbReference type="Gene3D" id="3.30.70.1050">
    <property type="entry name" value="Trigger factor ribosome-binding domain"/>
    <property type="match status" value="1"/>
</dbReference>
<dbReference type="Gene3D" id="1.10.3120.10">
    <property type="entry name" value="Trigger factor, C-terminal domain"/>
    <property type="match status" value="1"/>
</dbReference>
<dbReference type="HAMAP" id="MF_00303">
    <property type="entry name" value="Trigger_factor_Tig"/>
    <property type="match status" value="1"/>
</dbReference>
<dbReference type="InterPro" id="IPR046357">
    <property type="entry name" value="PPIase_dom_sf"/>
</dbReference>
<dbReference type="InterPro" id="IPR001179">
    <property type="entry name" value="PPIase_FKBP_dom"/>
</dbReference>
<dbReference type="InterPro" id="IPR005215">
    <property type="entry name" value="Trig_fac"/>
</dbReference>
<dbReference type="InterPro" id="IPR008880">
    <property type="entry name" value="Trigger_fac_C"/>
</dbReference>
<dbReference type="InterPro" id="IPR037041">
    <property type="entry name" value="Trigger_fac_C_sf"/>
</dbReference>
<dbReference type="InterPro" id="IPR008881">
    <property type="entry name" value="Trigger_fac_ribosome-bd_bac"/>
</dbReference>
<dbReference type="InterPro" id="IPR036611">
    <property type="entry name" value="Trigger_fac_ribosome-bd_sf"/>
</dbReference>
<dbReference type="InterPro" id="IPR027304">
    <property type="entry name" value="Trigger_fact/SurA_dom_sf"/>
</dbReference>
<dbReference type="NCBIfam" id="TIGR00115">
    <property type="entry name" value="tig"/>
    <property type="match status" value="1"/>
</dbReference>
<dbReference type="PANTHER" id="PTHR30560">
    <property type="entry name" value="TRIGGER FACTOR CHAPERONE AND PEPTIDYL-PROLYL CIS/TRANS ISOMERASE"/>
    <property type="match status" value="1"/>
</dbReference>
<dbReference type="PANTHER" id="PTHR30560:SF3">
    <property type="entry name" value="TRIGGER FACTOR-LIKE PROTEIN TIG, CHLOROPLASTIC"/>
    <property type="match status" value="1"/>
</dbReference>
<dbReference type="Pfam" id="PF00254">
    <property type="entry name" value="FKBP_C"/>
    <property type="match status" value="1"/>
</dbReference>
<dbReference type="Pfam" id="PF05698">
    <property type="entry name" value="Trigger_C"/>
    <property type="match status" value="1"/>
</dbReference>
<dbReference type="Pfam" id="PF05697">
    <property type="entry name" value="Trigger_N"/>
    <property type="match status" value="1"/>
</dbReference>
<dbReference type="PIRSF" id="PIRSF003095">
    <property type="entry name" value="Trigger_factor"/>
    <property type="match status" value="1"/>
</dbReference>
<dbReference type="SUPFAM" id="SSF54534">
    <property type="entry name" value="FKBP-like"/>
    <property type="match status" value="1"/>
</dbReference>
<dbReference type="SUPFAM" id="SSF109998">
    <property type="entry name" value="Triger factor/SurA peptide-binding domain-like"/>
    <property type="match status" value="1"/>
</dbReference>
<dbReference type="SUPFAM" id="SSF102735">
    <property type="entry name" value="Trigger factor ribosome-binding domain"/>
    <property type="match status" value="1"/>
</dbReference>
<dbReference type="PROSITE" id="PS50059">
    <property type="entry name" value="FKBP_PPIASE"/>
    <property type="match status" value="1"/>
</dbReference>
<name>TIG_STAAB</name>
<feature type="chain" id="PRO_0000256621" description="Trigger factor">
    <location>
        <begin position="1"/>
        <end position="433"/>
    </location>
</feature>
<feature type="domain" description="PPIase FKBP-type" evidence="1">
    <location>
        <begin position="163"/>
        <end position="248"/>
    </location>
</feature>
<keyword id="KW-0131">Cell cycle</keyword>
<keyword id="KW-0132">Cell division</keyword>
<keyword id="KW-0143">Chaperone</keyword>
<keyword id="KW-0963">Cytoplasm</keyword>
<keyword id="KW-0413">Isomerase</keyword>
<keyword id="KW-0697">Rotamase</keyword>
<evidence type="ECO:0000255" key="1">
    <source>
        <dbReference type="HAMAP-Rule" id="MF_00303"/>
    </source>
</evidence>
<reference key="1">
    <citation type="journal article" date="2007" name="PLoS ONE">
        <title>Molecular correlates of host specialization in Staphylococcus aureus.</title>
        <authorList>
            <person name="Herron-Olson L."/>
            <person name="Fitzgerald J.R."/>
            <person name="Musser J.M."/>
            <person name="Kapur V."/>
        </authorList>
    </citation>
    <scope>NUCLEOTIDE SEQUENCE [LARGE SCALE GENOMIC DNA]</scope>
    <source>
        <strain>bovine RF122 / ET3-1</strain>
    </source>
</reference>
<protein>
    <recommendedName>
        <fullName evidence="1">Trigger factor</fullName>
        <shortName evidence="1">TF</shortName>
        <ecNumber evidence="1">5.2.1.8</ecNumber>
    </recommendedName>
    <alternativeName>
        <fullName evidence="1">PPIase</fullName>
    </alternativeName>
</protein>
<accession>Q2YTB4</accession>
<sequence length="433" mass="48595">MTATWEKKEGNEGLLTVTVPAEKVNKALDQAFKKVVKQINVPGFRKGKVPRPIFEQRFGVEALYQDAIDILLPDAYGEAIDETDIKPVAQPEVSVTQIEKGKDFIFEATVTVEPEVKLGDYKGLEIEKQETELSDDELQEAIDHSLGHLAEMVVKEDGVVENGDTVNIDFSGSVDGEEFEGGQAEGYDLEIGSGSFIPGFEEQLEGMKVDEEKDVVVTFPEEYHAEELAGKEATFKTKVNEIKFKEVPELTDEIANELDAEANTVDEYKENLRKRLAEQKATDAENVEKEEAITKATDNTTIDIPEAMVNTELDRMVSEFAQRIQQQGLDLQTYFQISGQDESQLREQMKDDAEQRVKTNLTLTAIAEAEKIEATDEDIDKELEKMSKQFNISVEDIKNTLGNTDIIKNDVRIQKVIDLLRDNAKFVEGTKED</sequence>
<gene>
    <name evidence="1" type="primary">tig</name>
    <name type="ordered locus">SAB1535c</name>
</gene>